<accession>B7NVQ5</accession>
<organism>
    <name type="scientific">Escherichia coli O7:K1 (strain IAI39 / ExPEC)</name>
    <dbReference type="NCBI Taxonomy" id="585057"/>
    <lineage>
        <taxon>Bacteria</taxon>
        <taxon>Pseudomonadati</taxon>
        <taxon>Pseudomonadota</taxon>
        <taxon>Gammaproteobacteria</taxon>
        <taxon>Enterobacterales</taxon>
        <taxon>Enterobacteriaceae</taxon>
        <taxon>Escherichia</taxon>
    </lineage>
</organism>
<keyword id="KW-0210">Decarboxylase</keyword>
<keyword id="KW-0456">Lyase</keyword>
<keyword id="KW-0665">Pyrimidine biosynthesis</keyword>
<feature type="chain" id="PRO_1000138523" description="Orotidine 5'-phosphate decarboxylase">
    <location>
        <begin position="1"/>
        <end position="245"/>
    </location>
</feature>
<feature type="active site" description="Proton donor" evidence="1">
    <location>
        <position position="73"/>
    </location>
</feature>
<feature type="binding site" evidence="1">
    <location>
        <position position="22"/>
    </location>
    <ligand>
        <name>substrate</name>
    </ligand>
</feature>
<feature type="binding site" evidence="1">
    <location>
        <position position="44"/>
    </location>
    <ligand>
        <name>substrate</name>
    </ligand>
</feature>
<feature type="binding site" evidence="1">
    <location>
        <begin position="71"/>
        <end position="80"/>
    </location>
    <ligand>
        <name>substrate</name>
    </ligand>
</feature>
<feature type="binding site" evidence="1">
    <location>
        <position position="131"/>
    </location>
    <ligand>
        <name>substrate</name>
    </ligand>
</feature>
<feature type="binding site" evidence="1">
    <location>
        <position position="192"/>
    </location>
    <ligand>
        <name>substrate</name>
    </ligand>
</feature>
<feature type="binding site" evidence="1">
    <location>
        <position position="201"/>
    </location>
    <ligand>
        <name>substrate</name>
    </ligand>
</feature>
<feature type="binding site" evidence="1">
    <location>
        <position position="221"/>
    </location>
    <ligand>
        <name>substrate</name>
    </ligand>
</feature>
<feature type="binding site" evidence="1">
    <location>
        <position position="222"/>
    </location>
    <ligand>
        <name>substrate</name>
    </ligand>
</feature>
<proteinExistence type="inferred from homology"/>
<sequence>MTLTASSSSRAVTNSPVVVALDYHNRDAALAFVDKIDPRDCRLKVGKEMFTLFGPQFVRELQQRGFDIFLDLKFHDIPNTAAHAVAAAADLGVWMVNVHASGGARMMTAAREALVPFGKDAPLLIAVTVLTSMEASDLADLGVTLSPADYAERLAALTQKCGLDGVVCSAQEAVRFKQVFGQEFKLVTPGIRPQGSEAGDQRRIMTPEQALAAGVDYMVIGRPVTQSVDPAQTLKAINASLQRSA</sequence>
<protein>
    <recommendedName>
        <fullName evidence="1">Orotidine 5'-phosphate decarboxylase</fullName>
        <ecNumber evidence="1">4.1.1.23</ecNumber>
    </recommendedName>
    <alternativeName>
        <fullName evidence="1">OMP decarboxylase</fullName>
        <shortName evidence="1">OMPDCase</shortName>
        <shortName evidence="1">OMPdecase</shortName>
    </alternativeName>
</protein>
<comment type="function">
    <text evidence="1">Catalyzes the decarboxylation of orotidine 5'-monophosphate (OMP) to uridine 5'-monophosphate (UMP).</text>
</comment>
<comment type="catalytic activity">
    <reaction evidence="1">
        <text>orotidine 5'-phosphate + H(+) = UMP + CO2</text>
        <dbReference type="Rhea" id="RHEA:11596"/>
        <dbReference type="ChEBI" id="CHEBI:15378"/>
        <dbReference type="ChEBI" id="CHEBI:16526"/>
        <dbReference type="ChEBI" id="CHEBI:57538"/>
        <dbReference type="ChEBI" id="CHEBI:57865"/>
        <dbReference type="EC" id="4.1.1.23"/>
    </reaction>
</comment>
<comment type="pathway">
    <text evidence="1">Pyrimidine metabolism; UMP biosynthesis via de novo pathway; UMP from orotate: step 2/2.</text>
</comment>
<comment type="subunit">
    <text evidence="1">Homodimer.</text>
</comment>
<comment type="similarity">
    <text evidence="1">Belongs to the OMP decarboxylase family. Type 1 subfamily.</text>
</comment>
<gene>
    <name evidence="1" type="primary">pyrF</name>
    <name type="ordered locus">ECIAI39_1622</name>
</gene>
<reference key="1">
    <citation type="journal article" date="2009" name="PLoS Genet.">
        <title>Organised genome dynamics in the Escherichia coli species results in highly diverse adaptive paths.</title>
        <authorList>
            <person name="Touchon M."/>
            <person name="Hoede C."/>
            <person name="Tenaillon O."/>
            <person name="Barbe V."/>
            <person name="Baeriswyl S."/>
            <person name="Bidet P."/>
            <person name="Bingen E."/>
            <person name="Bonacorsi S."/>
            <person name="Bouchier C."/>
            <person name="Bouvet O."/>
            <person name="Calteau A."/>
            <person name="Chiapello H."/>
            <person name="Clermont O."/>
            <person name="Cruveiller S."/>
            <person name="Danchin A."/>
            <person name="Diard M."/>
            <person name="Dossat C."/>
            <person name="Karoui M.E."/>
            <person name="Frapy E."/>
            <person name="Garry L."/>
            <person name="Ghigo J.M."/>
            <person name="Gilles A.M."/>
            <person name="Johnson J."/>
            <person name="Le Bouguenec C."/>
            <person name="Lescat M."/>
            <person name="Mangenot S."/>
            <person name="Martinez-Jehanne V."/>
            <person name="Matic I."/>
            <person name="Nassif X."/>
            <person name="Oztas S."/>
            <person name="Petit M.A."/>
            <person name="Pichon C."/>
            <person name="Rouy Z."/>
            <person name="Ruf C.S."/>
            <person name="Schneider D."/>
            <person name="Tourret J."/>
            <person name="Vacherie B."/>
            <person name="Vallenet D."/>
            <person name="Medigue C."/>
            <person name="Rocha E.P.C."/>
            <person name="Denamur E."/>
        </authorList>
    </citation>
    <scope>NUCLEOTIDE SEQUENCE [LARGE SCALE GENOMIC DNA]</scope>
    <source>
        <strain>IAI39 / ExPEC</strain>
    </source>
</reference>
<dbReference type="EC" id="4.1.1.23" evidence="1"/>
<dbReference type="EMBL" id="CU928164">
    <property type="protein sequence ID" value="CAR17753.1"/>
    <property type="molecule type" value="Genomic_DNA"/>
</dbReference>
<dbReference type="RefSeq" id="WP_000176265.1">
    <property type="nucleotide sequence ID" value="NC_011750.1"/>
</dbReference>
<dbReference type="RefSeq" id="YP_002407622.1">
    <property type="nucleotide sequence ID" value="NC_011750.1"/>
</dbReference>
<dbReference type="SMR" id="B7NVQ5"/>
<dbReference type="STRING" id="585057.ECIAI39_1622"/>
<dbReference type="KEGG" id="ect:ECIAI39_1622"/>
<dbReference type="PATRIC" id="fig|585057.6.peg.1693"/>
<dbReference type="HOGENOM" id="CLU_067069_0_0_6"/>
<dbReference type="UniPathway" id="UPA00070">
    <property type="reaction ID" value="UER00120"/>
</dbReference>
<dbReference type="Proteomes" id="UP000000749">
    <property type="component" value="Chromosome"/>
</dbReference>
<dbReference type="GO" id="GO:0005829">
    <property type="term" value="C:cytosol"/>
    <property type="evidence" value="ECO:0007669"/>
    <property type="project" value="TreeGrafter"/>
</dbReference>
<dbReference type="GO" id="GO:0004590">
    <property type="term" value="F:orotidine-5'-phosphate decarboxylase activity"/>
    <property type="evidence" value="ECO:0007669"/>
    <property type="project" value="UniProtKB-UniRule"/>
</dbReference>
<dbReference type="GO" id="GO:0006207">
    <property type="term" value="P:'de novo' pyrimidine nucleobase biosynthetic process"/>
    <property type="evidence" value="ECO:0007669"/>
    <property type="project" value="InterPro"/>
</dbReference>
<dbReference type="GO" id="GO:0044205">
    <property type="term" value="P:'de novo' UMP biosynthetic process"/>
    <property type="evidence" value="ECO:0007669"/>
    <property type="project" value="UniProtKB-UniRule"/>
</dbReference>
<dbReference type="CDD" id="cd04725">
    <property type="entry name" value="OMP_decarboxylase_like"/>
    <property type="match status" value="1"/>
</dbReference>
<dbReference type="FunFam" id="3.20.20.70:FF:000015">
    <property type="entry name" value="Orotidine 5'-phosphate decarboxylase"/>
    <property type="match status" value="1"/>
</dbReference>
<dbReference type="Gene3D" id="3.20.20.70">
    <property type="entry name" value="Aldolase class I"/>
    <property type="match status" value="1"/>
</dbReference>
<dbReference type="HAMAP" id="MF_01200_B">
    <property type="entry name" value="OMPdecase_type1_B"/>
    <property type="match status" value="1"/>
</dbReference>
<dbReference type="InterPro" id="IPR013785">
    <property type="entry name" value="Aldolase_TIM"/>
</dbReference>
<dbReference type="InterPro" id="IPR014732">
    <property type="entry name" value="OMPdecase"/>
</dbReference>
<dbReference type="InterPro" id="IPR018089">
    <property type="entry name" value="OMPdecase_AS"/>
</dbReference>
<dbReference type="InterPro" id="IPR047596">
    <property type="entry name" value="OMPdecase_bac"/>
</dbReference>
<dbReference type="InterPro" id="IPR001754">
    <property type="entry name" value="OMPdeCOase_dom"/>
</dbReference>
<dbReference type="InterPro" id="IPR011060">
    <property type="entry name" value="RibuloseP-bd_barrel"/>
</dbReference>
<dbReference type="NCBIfam" id="NF001273">
    <property type="entry name" value="PRK00230.1"/>
    <property type="match status" value="1"/>
</dbReference>
<dbReference type="NCBIfam" id="TIGR01740">
    <property type="entry name" value="pyrF"/>
    <property type="match status" value="1"/>
</dbReference>
<dbReference type="PANTHER" id="PTHR32119">
    <property type="entry name" value="OROTIDINE 5'-PHOSPHATE DECARBOXYLASE"/>
    <property type="match status" value="1"/>
</dbReference>
<dbReference type="PANTHER" id="PTHR32119:SF2">
    <property type="entry name" value="OROTIDINE 5'-PHOSPHATE DECARBOXYLASE"/>
    <property type="match status" value="1"/>
</dbReference>
<dbReference type="Pfam" id="PF00215">
    <property type="entry name" value="OMPdecase"/>
    <property type="match status" value="1"/>
</dbReference>
<dbReference type="SMART" id="SM00934">
    <property type="entry name" value="OMPdecase"/>
    <property type="match status" value="1"/>
</dbReference>
<dbReference type="SUPFAM" id="SSF51366">
    <property type="entry name" value="Ribulose-phoshate binding barrel"/>
    <property type="match status" value="1"/>
</dbReference>
<dbReference type="PROSITE" id="PS00156">
    <property type="entry name" value="OMPDECASE"/>
    <property type="match status" value="1"/>
</dbReference>
<name>PYRF_ECO7I</name>
<evidence type="ECO:0000255" key="1">
    <source>
        <dbReference type="HAMAP-Rule" id="MF_01200"/>
    </source>
</evidence>